<gene>
    <name type="primary">Treml4</name>
    <name type="synonym">TLT4</name>
    <name type="synonym">Treml3</name>
</gene>
<name>TRML4_MOUSE</name>
<keyword id="KW-0025">Alternative splicing</keyword>
<keyword id="KW-0051">Antiviral defense</keyword>
<keyword id="KW-1003">Cell membrane</keyword>
<keyword id="KW-1015">Disulfide bond</keyword>
<keyword id="KW-0325">Glycoprotein</keyword>
<keyword id="KW-0391">Immunity</keyword>
<keyword id="KW-0393">Immunoglobulin domain</keyword>
<keyword id="KW-0399">Innate immunity</keyword>
<keyword id="KW-0472">Membrane</keyword>
<keyword id="KW-0675">Receptor</keyword>
<keyword id="KW-1185">Reference proteome</keyword>
<keyword id="KW-0732">Signal</keyword>
<keyword id="KW-0812">Transmembrane</keyword>
<keyword id="KW-1133">Transmembrane helix</keyword>
<comment type="function">
    <text evidence="4 5 6">Positively regulates Toll-like receptor signaling via TLR7, TLR9 and TLR13 in neutrophils and splenic macrophages (PubMed:25848864). Regulates TLR7 signaling by controlling ligand-induced recruitment of TLR7 from the endoplasmic reticulum to endosomes and lysosomes (PubMed:25848864). Positively regulates Toll-like receptor TLR9-induced production of inflammatory cytokines but is dispensable for IFNB1 production (PubMed:25848864). Involved in the anti-viral response to several viruses including influenza virus, vesicular stomatitis virus and cytomegalovirus (PubMed:25848864). Binds to late apoptotic, and necrotic cells, but not living or early apoptotic cells, but is not essential for uptake of dying cells by dendritic cells (DCs) (PubMed:19155473, PubMed:22210914, PubMed:25848864). Does not bind nucleic acids (PubMed:25848864). May participate in antigen presentation (PubMed:22210914).</text>
</comment>
<comment type="subunit">
    <text evidence="4">Interacts with TYROBP/DAP12.</text>
</comment>
<comment type="subcellular location">
    <subcellularLocation>
        <location evidence="10 11">Cell membrane</location>
        <topology evidence="9">Single-pass type I membrane protein</topology>
    </subcellularLocation>
</comment>
<comment type="alternative products">
    <event type="alternative splicing"/>
    <isoform>
        <id>Q3LRV9-1</id>
        <name>1</name>
        <sequence type="displayed"/>
    </isoform>
    <isoform>
        <id>Q3LRV9-2</id>
        <name>2</name>
        <sequence type="described" ref="VSP_044083"/>
    </isoform>
    <isoform>
        <id>Q3LRV9-3</id>
        <name>3</name>
        <sequence type="described" ref="VSP_044084"/>
    </isoform>
</comment>
<comment type="tissue specificity">
    <text evidence="4 5 6">Predominantly expressed in spleen, with highest levels on selected populations of macrophages, including red pulp macrophages, and on subsets of dendritic cells (DC), mostly on CD8alpha(+) DC (at protein level) (PubMed:19155473, PubMed:22210914, PubMed:25848864). Also expressed on blood and spleen Ly6C(low) monocytes (at protein level) (PubMed:22210914). Not expressed on lymphocytes or granulocytes (at protein level) (PubMed:19155473, PubMed:22210914).</text>
</comment>
<comment type="induction">
    <text evidence="6">Induced by synthetic TLR7 ligand gardiquimod (GRD) in cultured splenic macrophages.</text>
</comment>
<comment type="domain">
    <text evidence="6">The cytoplasmic tail appears to be dispensable for TLR7-mediated signaling.</text>
</comment>
<comment type="disruption phenotype">
    <text evidence="5 6">No visible phenotype (PubMed:22210914). Mutant mice are born at the expected Mendelian frequency and are fertile and healthy (PubMed:22210914). In response to gardiquimod (GRD) or Resiquimod (R-848), 2 synthetic TLR7 ligands, levels of TNF, IL12B, IFNB1 and CXCL10 in splenic macrophages and in serum are severely reduced (PubMed:25848864). In response to CpG DNA, a TLR9 ligand, levels of TNF and IL12B but not IFNB1 and CXCL10 are severely reduced (PubMed:25848864). In response to infection with influenza virus (strain A/PuertoRico/8/34 (PR8)) the production of TNF, IL12B, IFNB1 and CXCL10 is severely impaired, the viral load is higher in the lungs, recovery after weight loss and survival are also impaired (PubMed:25848864). No defects in response to lipopolysaccharide (LPS) (PubMed:25848864). Reduced symptom severity in a mouse model for the autoimmune disease systemic lupus erythematosus (SLE) (PubMed:25848864).</text>
</comment>
<evidence type="ECO:0000255" key="1"/>
<evidence type="ECO:0000255" key="2">
    <source>
        <dbReference type="PROSITE-ProRule" id="PRU00114"/>
    </source>
</evidence>
<evidence type="ECO:0000256" key="3">
    <source>
        <dbReference type="SAM" id="MobiDB-lite"/>
    </source>
</evidence>
<evidence type="ECO:0000269" key="4">
    <source>
    </source>
</evidence>
<evidence type="ECO:0000269" key="5">
    <source>
    </source>
</evidence>
<evidence type="ECO:0000269" key="6">
    <source>
    </source>
</evidence>
<evidence type="ECO:0000303" key="7">
    <source ref="1"/>
</evidence>
<evidence type="ECO:0000303" key="8">
    <source ref="2"/>
</evidence>
<evidence type="ECO:0000305" key="9"/>
<evidence type="ECO:0000305" key="10">
    <source>
    </source>
</evidence>
<evidence type="ECO:0000305" key="11">
    <source>
    </source>
</evidence>
<organism>
    <name type="scientific">Mus musculus</name>
    <name type="common">Mouse</name>
    <dbReference type="NCBI Taxonomy" id="10090"/>
    <lineage>
        <taxon>Eukaryota</taxon>
        <taxon>Metazoa</taxon>
        <taxon>Chordata</taxon>
        <taxon>Craniata</taxon>
        <taxon>Vertebrata</taxon>
        <taxon>Euteleostomi</taxon>
        <taxon>Mammalia</taxon>
        <taxon>Eutheria</taxon>
        <taxon>Euarchontoglires</taxon>
        <taxon>Glires</taxon>
        <taxon>Rodentia</taxon>
        <taxon>Myomorpha</taxon>
        <taxon>Muroidea</taxon>
        <taxon>Muridae</taxon>
        <taxon>Murinae</taxon>
        <taxon>Mus</taxon>
        <taxon>Mus</taxon>
    </lineage>
</organism>
<accession>Q3LRV9</accession>
<accession>A6XA78</accession>
<accession>E9Q825</accession>
<accession>Q3LRW0</accession>
<sequence>MAWRYSQLLLVPVQLVFLASVCCPGVWGSTVSEELHRMVGQSLSVQCQYKPKEESYVLKTWCRQTAPSKCTRVVTTSEPRKAARELQHTIWDDPEAGFFNITMTQLTEDDSAFYWCGPYYPSLREVTVLRNISLVVSPAPSTLPSQTIAPLPESTATIFMPFPVLTTSPEETTDSSINGTGHRNQSSSSPGWTSPGLLVSVQYGLLLLKALMLSVFCVLLCWRSGQGREYMAETMELSKLPHISKSLDTVSHISGYEKKANWY</sequence>
<dbReference type="EMBL" id="DQ087185">
    <property type="protein sequence ID" value="ABA38681.1"/>
    <property type="molecule type" value="mRNA"/>
</dbReference>
<dbReference type="EMBL" id="DQ087186">
    <property type="protein sequence ID" value="ABA38682.1"/>
    <property type="molecule type" value="mRNA"/>
</dbReference>
<dbReference type="EMBL" id="DQ186654">
    <property type="protein sequence ID" value="ABA29758.1"/>
    <property type="molecule type" value="mRNA"/>
</dbReference>
<dbReference type="EMBL" id="DQ186655">
    <property type="protein sequence ID" value="ABA29759.1"/>
    <property type="molecule type" value="mRNA"/>
</dbReference>
<dbReference type="EMBL" id="AC166164">
    <property type="status" value="NOT_ANNOTATED_CDS"/>
    <property type="molecule type" value="Genomic_DNA"/>
</dbReference>
<dbReference type="EMBL" id="CH466559">
    <property type="protein sequence ID" value="EDL23604.1"/>
    <property type="molecule type" value="Genomic_DNA"/>
</dbReference>
<dbReference type="EMBL" id="BC117091">
    <property type="protein sequence ID" value="AAI17092.1"/>
    <property type="molecule type" value="mRNA"/>
</dbReference>
<dbReference type="EMBL" id="BC137666">
    <property type="protein sequence ID" value="AAI37667.1"/>
    <property type="molecule type" value="mRNA"/>
</dbReference>
<dbReference type="CCDS" id="CCDS28862.1">
    <molecule id="Q3LRV9-1"/>
</dbReference>
<dbReference type="CCDS" id="CCDS50141.1">
    <molecule id="Q3LRV9-2"/>
</dbReference>
<dbReference type="RefSeq" id="NP_001029094.1">
    <molecule id="Q3LRV9-2"/>
    <property type="nucleotide sequence ID" value="NM_001033922.2"/>
</dbReference>
<dbReference type="RefSeq" id="NP_766211.2">
    <molecule id="Q3LRV9-1"/>
    <property type="nucleotide sequence ID" value="NM_172623.2"/>
</dbReference>
<dbReference type="RefSeq" id="XP_006524212.1">
    <molecule id="Q3LRV9-3"/>
    <property type="nucleotide sequence ID" value="XM_006524149.4"/>
</dbReference>
<dbReference type="SMR" id="Q3LRV9"/>
<dbReference type="FunCoup" id="Q3LRV9">
    <property type="interactions" value="404"/>
</dbReference>
<dbReference type="STRING" id="10090.ENSMUSP00000118772"/>
<dbReference type="GlyCosmos" id="Q3LRV9">
    <property type="glycosylation" value="1 site, No reported glycans"/>
</dbReference>
<dbReference type="GlyGen" id="Q3LRV9">
    <property type="glycosylation" value="1 site"/>
</dbReference>
<dbReference type="iPTMnet" id="Q3LRV9"/>
<dbReference type="PhosphoSitePlus" id="Q3LRV9"/>
<dbReference type="PaxDb" id="10090-ENSMUSP00000118772"/>
<dbReference type="ProteomicsDB" id="298237">
    <molecule id="Q3LRV9-1"/>
</dbReference>
<dbReference type="ProteomicsDB" id="298238">
    <molecule id="Q3LRV9-2"/>
</dbReference>
<dbReference type="ProteomicsDB" id="298239">
    <molecule id="Q3LRV9-3"/>
</dbReference>
<dbReference type="ABCD" id="Q3LRV9">
    <property type="antibodies" value="1 sequenced antibody"/>
</dbReference>
<dbReference type="Antibodypedia" id="70761">
    <property type="antibodies" value="41 antibodies from 14 providers"/>
</dbReference>
<dbReference type="DNASU" id="224840"/>
<dbReference type="Ensembl" id="ENSMUST00000059873.14">
    <molecule id="Q3LRV9-1"/>
    <property type="protein sequence ID" value="ENSMUSP00000054121.8"/>
    <property type="gene ID" value="ENSMUSG00000051682.16"/>
</dbReference>
<dbReference type="Ensembl" id="ENSMUST00000125426.8">
    <molecule id="Q3LRV9-2"/>
    <property type="protein sequence ID" value="ENSMUSP00000119177.2"/>
    <property type="gene ID" value="ENSMUSG00000051682.16"/>
</dbReference>
<dbReference type="GeneID" id="224840"/>
<dbReference type="KEGG" id="mmu:224840"/>
<dbReference type="UCSC" id="uc008cwz.1">
    <molecule id="Q3LRV9-2"/>
    <property type="organism name" value="mouse"/>
</dbReference>
<dbReference type="UCSC" id="uc008cxa.1">
    <molecule id="Q3LRV9-1"/>
    <property type="organism name" value="mouse"/>
</dbReference>
<dbReference type="UCSC" id="uc012avb.1">
    <molecule id="Q3LRV9-3"/>
    <property type="organism name" value="mouse"/>
</dbReference>
<dbReference type="AGR" id="MGI:1923239"/>
<dbReference type="CTD" id="285852"/>
<dbReference type="MGI" id="MGI:1923239">
    <property type="gene designation" value="Treml4"/>
</dbReference>
<dbReference type="VEuPathDB" id="HostDB:ENSMUSG00000051682"/>
<dbReference type="eggNOG" id="ENOG502TG0M">
    <property type="taxonomic scope" value="Eukaryota"/>
</dbReference>
<dbReference type="GeneTree" id="ENSGT00940000153835"/>
<dbReference type="InParanoid" id="Q3LRV9"/>
<dbReference type="OrthoDB" id="9805957at2759"/>
<dbReference type="PhylomeDB" id="Q3LRV9"/>
<dbReference type="Reactome" id="R-MMU-198933">
    <property type="pathway name" value="Immunoregulatory interactions between a Lymphoid and a non-Lymphoid cell"/>
</dbReference>
<dbReference type="BioGRID-ORCS" id="224840">
    <property type="hits" value="2 hits in 76 CRISPR screens"/>
</dbReference>
<dbReference type="PRO" id="PR:Q3LRV9"/>
<dbReference type="Proteomes" id="UP000000589">
    <property type="component" value="Chromosome 17"/>
</dbReference>
<dbReference type="RNAct" id="Q3LRV9">
    <property type="molecule type" value="protein"/>
</dbReference>
<dbReference type="Bgee" id="ENSMUSG00000051682">
    <property type="expression patterns" value="Expressed in granulocyte and 35 other cell types or tissues"/>
</dbReference>
<dbReference type="ExpressionAtlas" id="Q3LRV9">
    <property type="expression patterns" value="baseline and differential"/>
</dbReference>
<dbReference type="GO" id="GO:0005783">
    <property type="term" value="C:endoplasmic reticulum"/>
    <property type="evidence" value="ECO:0000314"/>
    <property type="project" value="UniProtKB"/>
</dbReference>
<dbReference type="GO" id="GO:0005886">
    <property type="term" value="C:plasma membrane"/>
    <property type="evidence" value="ECO:0007669"/>
    <property type="project" value="UniProtKB-SubCell"/>
</dbReference>
<dbReference type="GO" id="GO:0051607">
    <property type="term" value="P:defense response to virus"/>
    <property type="evidence" value="ECO:0007669"/>
    <property type="project" value="UniProtKB-KW"/>
</dbReference>
<dbReference type="GO" id="GO:0045087">
    <property type="term" value="P:innate immune response"/>
    <property type="evidence" value="ECO:0007669"/>
    <property type="project" value="UniProtKB-KW"/>
</dbReference>
<dbReference type="GO" id="GO:0006911">
    <property type="term" value="P:phagocytosis, engulfment"/>
    <property type="evidence" value="ECO:0000314"/>
    <property type="project" value="MGI"/>
</dbReference>
<dbReference type="GO" id="GO:0002230">
    <property type="term" value="P:positive regulation of defense response to virus by host"/>
    <property type="evidence" value="ECO:0000315"/>
    <property type="project" value="UniProtKB"/>
</dbReference>
<dbReference type="GO" id="GO:0034181">
    <property type="term" value="P:positive regulation of toll-like receptor 13 signaling pathway"/>
    <property type="evidence" value="ECO:0000315"/>
    <property type="project" value="UniProtKB"/>
</dbReference>
<dbReference type="GO" id="GO:0034157">
    <property type="term" value="P:positive regulation of toll-like receptor 7 signaling pathway"/>
    <property type="evidence" value="ECO:0000315"/>
    <property type="project" value="UniProtKB"/>
</dbReference>
<dbReference type="GO" id="GO:0034165">
    <property type="term" value="P:positive regulation of toll-like receptor 9 signaling pathway"/>
    <property type="evidence" value="ECO:0000315"/>
    <property type="project" value="UniProtKB"/>
</dbReference>
<dbReference type="GO" id="GO:0008104">
    <property type="term" value="P:protein localization"/>
    <property type="evidence" value="ECO:0000315"/>
    <property type="project" value="UniProtKB"/>
</dbReference>
<dbReference type="GO" id="GO:0002457">
    <property type="term" value="P:T cell antigen processing and presentation"/>
    <property type="evidence" value="ECO:0000315"/>
    <property type="project" value="MGI"/>
</dbReference>
<dbReference type="CDD" id="cd05716">
    <property type="entry name" value="IgV_pIgR_like"/>
    <property type="match status" value="1"/>
</dbReference>
<dbReference type="FunFam" id="2.60.40.10:FF:000370">
    <property type="entry name" value="CMRF35-like molecule 1"/>
    <property type="match status" value="1"/>
</dbReference>
<dbReference type="Gene3D" id="2.60.40.10">
    <property type="entry name" value="Immunoglobulins"/>
    <property type="match status" value="1"/>
</dbReference>
<dbReference type="InterPro" id="IPR007110">
    <property type="entry name" value="Ig-like_dom"/>
</dbReference>
<dbReference type="InterPro" id="IPR036179">
    <property type="entry name" value="Ig-like_dom_sf"/>
</dbReference>
<dbReference type="InterPro" id="IPR013783">
    <property type="entry name" value="Ig-like_fold"/>
</dbReference>
<dbReference type="InterPro" id="IPR003599">
    <property type="entry name" value="Ig_sub"/>
</dbReference>
<dbReference type="InterPro" id="IPR013106">
    <property type="entry name" value="Ig_V-set"/>
</dbReference>
<dbReference type="InterPro" id="IPR052314">
    <property type="entry name" value="Immune_rcpt_domain"/>
</dbReference>
<dbReference type="PANTHER" id="PTHR16423:SF9">
    <property type="entry name" value="TREM-LIKE TRANSCRIPT 4 PROTEIN"/>
    <property type="match status" value="1"/>
</dbReference>
<dbReference type="PANTHER" id="PTHR16423">
    <property type="entry name" value="TREM-LIKE TRANSCRIPT PROTEIN"/>
    <property type="match status" value="1"/>
</dbReference>
<dbReference type="Pfam" id="PF07686">
    <property type="entry name" value="V-set"/>
    <property type="match status" value="1"/>
</dbReference>
<dbReference type="SMART" id="SM00409">
    <property type="entry name" value="IG"/>
    <property type="match status" value="1"/>
</dbReference>
<dbReference type="SUPFAM" id="SSF48726">
    <property type="entry name" value="Immunoglobulin"/>
    <property type="match status" value="1"/>
</dbReference>
<dbReference type="PROSITE" id="PS50835">
    <property type="entry name" value="IG_LIKE"/>
    <property type="match status" value="1"/>
</dbReference>
<reference key="1">
    <citation type="submission" date="2005-06" db="EMBL/GenBank/DDBJ databases">
        <title>Trem-like transcripts expression in microglia and peripheral myeloid cells display a common pattern.</title>
        <authorList>
            <person name="Melchior B."/>
            <person name="Carson M.J."/>
        </authorList>
    </citation>
    <scope>NUCLEOTIDE SEQUENCE [MRNA] (ISOFORM 1)</scope>
    <scope>NUCLEOTIDE SEQUENCE [MRNA] OF 1-223 (ISOFORM 3)</scope>
    <source>
        <strain>C57BL/6J</strain>
    </source>
</reference>
<reference key="2">
    <citation type="submission" date="2005-08" db="EMBL/GenBank/DDBJ databases">
        <title>Cloning and characterization of a novel activating TREM family molecule expressed on antigen presenting cells, TRAPC.</title>
        <authorList>
            <person name="van der Holst R."/>
            <person name="Helander I."/>
            <person name="Karre K."/>
            <person name="Sundback J."/>
        </authorList>
    </citation>
    <scope>NUCLEOTIDE SEQUENCE [MRNA] (ISOFORMS 1 AND 2)</scope>
    <source>
        <strain>C57BL/6J</strain>
    </source>
</reference>
<reference key="3">
    <citation type="journal article" date="2009" name="PLoS Biol.">
        <title>Lineage-specific biology revealed by a finished genome assembly of the mouse.</title>
        <authorList>
            <person name="Church D.M."/>
            <person name="Goodstadt L."/>
            <person name="Hillier L.W."/>
            <person name="Zody M.C."/>
            <person name="Goldstein S."/>
            <person name="She X."/>
            <person name="Bult C.J."/>
            <person name="Agarwala R."/>
            <person name="Cherry J.L."/>
            <person name="DiCuccio M."/>
            <person name="Hlavina W."/>
            <person name="Kapustin Y."/>
            <person name="Meric P."/>
            <person name="Maglott D."/>
            <person name="Birtle Z."/>
            <person name="Marques A.C."/>
            <person name="Graves T."/>
            <person name="Zhou S."/>
            <person name="Teague B."/>
            <person name="Potamousis K."/>
            <person name="Churas C."/>
            <person name="Place M."/>
            <person name="Herschleb J."/>
            <person name="Runnheim R."/>
            <person name="Forrest D."/>
            <person name="Amos-Landgraf J."/>
            <person name="Schwartz D.C."/>
            <person name="Cheng Z."/>
            <person name="Lindblad-Toh K."/>
            <person name="Eichler E.E."/>
            <person name="Ponting C.P."/>
        </authorList>
    </citation>
    <scope>NUCLEOTIDE SEQUENCE [LARGE SCALE GENOMIC DNA]</scope>
    <source>
        <strain>C57BL/6J</strain>
    </source>
</reference>
<reference key="4">
    <citation type="submission" date="2005-07" db="EMBL/GenBank/DDBJ databases">
        <authorList>
            <person name="Mural R.J."/>
            <person name="Adams M.D."/>
            <person name="Myers E.W."/>
            <person name="Smith H.O."/>
            <person name="Venter J.C."/>
        </authorList>
    </citation>
    <scope>NUCLEOTIDE SEQUENCE [LARGE SCALE GENOMIC DNA]</scope>
</reference>
<reference key="5">
    <citation type="journal article" date="2004" name="Genome Res.">
        <title>The status, quality, and expansion of the NIH full-length cDNA project: the Mammalian Gene Collection (MGC).</title>
        <authorList>
            <consortium name="The MGC Project Team"/>
        </authorList>
    </citation>
    <scope>NUCLEOTIDE SEQUENCE [LARGE SCALE MRNA] (ISOFORM 1)</scope>
    <source>
        <tissue>Testis</tissue>
        <tissue>Thymus</tissue>
    </source>
</reference>
<reference key="6">
    <citation type="journal article" date="2009" name="J. Immunol.">
        <title>A new triggering receptor expressed on myeloid cells (Trem) family member, Trem-like 4, binds to dead cells and is a DNAX activation protein 12-linked marker for subsets of mouse macrophages and dendritic cells.</title>
        <authorList>
            <person name="Hemmi H."/>
            <person name="Idoyaga J."/>
            <person name="Suda K."/>
            <person name="Suda N."/>
            <person name="Kennedy K."/>
            <person name="Noda M."/>
            <person name="Aderem A."/>
            <person name="Steinman R.M."/>
        </authorList>
    </citation>
    <scope>FUNCTION</scope>
    <scope>INTERACTION WITH TYROBP</scope>
    <scope>SUBCELLULAR LOCATION</scope>
    <scope>TISSUE SPECIFICITY</scope>
</reference>
<reference key="7">
    <citation type="journal article" date="2012" name="J. Immunol.">
        <title>Treml4, an Ig superfamily member, mediates presentation of several antigens to T cells in vivo, including protective immunity to HER2 protein.</title>
        <authorList>
            <person name="Hemmi H."/>
            <person name="Zaidi N."/>
            <person name="Wang B."/>
            <person name="Matos I."/>
            <person name="Fiorese C."/>
            <person name="Lubkin A."/>
            <person name="Zbytnuik L."/>
            <person name="Suda K."/>
            <person name="Zhang K."/>
            <person name="Noda M."/>
            <person name="Kaisho T."/>
            <person name="Steinman R.M."/>
            <person name="Idoyaga J."/>
        </authorList>
    </citation>
    <scope>FUNCTION</scope>
    <scope>SUBCELLULAR LOCATION</scope>
    <scope>TISSUE SPECIFICITY</scope>
    <scope>DISRUPTION PHENOTYPE</scope>
</reference>
<reference key="8">
    <citation type="journal article" date="2015" name="Nat. Immunol.">
        <title>The receptor TREML4 amplifies TLR7-mediated signaling during antiviral responses and autoimmunity.</title>
        <authorList>
            <person name="Ramirez-Ortiz Z.G."/>
            <person name="Prasad A."/>
            <person name="Griffith J.W."/>
            <person name="Pendergraft W.F. III"/>
            <person name="Cowley G.S."/>
            <person name="Root D.E."/>
            <person name="Tai M."/>
            <person name="Luster A.D."/>
            <person name="El Khoury J."/>
            <person name="Hacohen N."/>
            <person name="Means T.K."/>
        </authorList>
    </citation>
    <scope>FUNCTION</scope>
    <scope>TISSUE SPECIFICITY</scope>
    <scope>INDUCTION</scope>
    <scope>DOMAIN</scope>
    <scope>DISRUPTION PHENOTYPE</scope>
    <scope>MUTAGENESIS OF LYS-209</scope>
</reference>
<protein>
    <recommendedName>
        <fullName>Trem-like transcript 4 protein</fullName>
        <shortName>TLT-4</shortName>
    </recommendedName>
    <alternativeName>
        <fullName>Triggering receptor expressed on myeloid cells-like protein 3</fullName>
    </alternativeName>
    <alternativeName>
        <fullName>Triggering receptor expressed on myeloid cells-like protein 4</fullName>
    </alternativeName>
</protein>
<feature type="signal peptide" evidence="1">
    <location>
        <begin position="1"/>
        <end position="28"/>
    </location>
</feature>
<feature type="chain" id="PRO_0000418835" description="Trem-like transcript 4 protein">
    <location>
        <begin position="29"/>
        <end position="263"/>
    </location>
</feature>
<feature type="topological domain" description="Extracellular" evidence="9">
    <location>
        <begin position="29"/>
        <end position="200"/>
    </location>
</feature>
<feature type="transmembrane region" description="Helical" evidence="1">
    <location>
        <begin position="201"/>
        <end position="221"/>
    </location>
</feature>
<feature type="topological domain" description="Cytoplasmic" evidence="9">
    <location>
        <begin position="222"/>
        <end position="263"/>
    </location>
</feature>
<feature type="domain" description="Ig-like V-type">
    <location>
        <begin position="29"/>
        <end position="132"/>
    </location>
</feature>
<feature type="region of interest" description="Disordered" evidence="3">
    <location>
        <begin position="168"/>
        <end position="191"/>
    </location>
</feature>
<feature type="glycosylation site" description="N-linked (GlcNAc...) asparagine" evidence="1">
    <location>
        <position position="100"/>
    </location>
</feature>
<feature type="disulfide bond" evidence="2">
    <location>
        <begin position="47"/>
        <end position="116"/>
    </location>
</feature>
<feature type="splice variant" id="VSP_044083" description="In isoform 2." evidence="8">
    <location>
        <begin position="21"/>
        <end position="24"/>
    </location>
</feature>
<feature type="splice variant" id="VSP_044084" description="In isoform 3." evidence="7">
    <original>NQSSSSPGWTSPGLLVSVQYGLLLLKALMLSVFCVLLCWRSGQGREYMAETMELSKLPHISKSLDTVSHISGYEKKANWY</original>
    <variation>DESTWQRRWSFQNYLTSPSPWTRLATSQGMRRRLTGTKAEQAKLPLYRSHQASPRETTARPASQIARAN</variation>
    <location>
        <begin position="184"/>
        <end position="263"/>
    </location>
</feature>
<feature type="mutagenesis site" description="Loss of TLR7 signaling." evidence="6">
    <original>K</original>
    <variation>L</variation>
    <location>
        <position position="209"/>
    </location>
</feature>
<proteinExistence type="evidence at protein level"/>